<reference key="1">
    <citation type="journal article" date="2004" name="Proc. Natl. Acad. Sci. U.S.A.">
        <title>Complete genomes of two clinical Staphylococcus aureus strains: evidence for the rapid evolution of virulence and drug resistance.</title>
        <authorList>
            <person name="Holden M.T.G."/>
            <person name="Feil E.J."/>
            <person name="Lindsay J.A."/>
            <person name="Peacock S.J."/>
            <person name="Day N.P.J."/>
            <person name="Enright M.C."/>
            <person name="Foster T.J."/>
            <person name="Moore C.E."/>
            <person name="Hurst L."/>
            <person name="Atkin R."/>
            <person name="Barron A."/>
            <person name="Bason N."/>
            <person name="Bentley S.D."/>
            <person name="Chillingworth C."/>
            <person name="Chillingworth T."/>
            <person name="Churcher C."/>
            <person name="Clark L."/>
            <person name="Corton C."/>
            <person name="Cronin A."/>
            <person name="Doggett J."/>
            <person name="Dowd L."/>
            <person name="Feltwell T."/>
            <person name="Hance Z."/>
            <person name="Harris B."/>
            <person name="Hauser H."/>
            <person name="Holroyd S."/>
            <person name="Jagels K."/>
            <person name="James K.D."/>
            <person name="Lennard N."/>
            <person name="Line A."/>
            <person name="Mayes R."/>
            <person name="Moule S."/>
            <person name="Mungall K."/>
            <person name="Ormond D."/>
            <person name="Quail M.A."/>
            <person name="Rabbinowitsch E."/>
            <person name="Rutherford K.M."/>
            <person name="Sanders M."/>
            <person name="Sharp S."/>
            <person name="Simmonds M."/>
            <person name="Stevens K."/>
            <person name="Whitehead S."/>
            <person name="Barrell B.G."/>
            <person name="Spratt B.G."/>
            <person name="Parkhill J."/>
        </authorList>
    </citation>
    <scope>NUCLEOTIDE SEQUENCE [LARGE SCALE GENOMIC DNA]</scope>
    <source>
        <strain>MSSA476</strain>
    </source>
</reference>
<dbReference type="EMBL" id="BX571857">
    <property type="protein sequence ID" value="CAG43380.1"/>
    <property type="molecule type" value="Genomic_DNA"/>
</dbReference>
<dbReference type="KEGG" id="sas:SAS1579"/>
<dbReference type="HOGENOM" id="CLU_128147_0_0_9"/>
<dbReference type="Gene3D" id="3.30.70.260">
    <property type="match status" value="1"/>
</dbReference>
<dbReference type="HAMAP" id="MF_00707">
    <property type="entry name" value="UPF0735"/>
    <property type="match status" value="1"/>
</dbReference>
<dbReference type="InterPro" id="IPR045865">
    <property type="entry name" value="ACT-like_dom_sf"/>
</dbReference>
<dbReference type="InterPro" id="IPR002912">
    <property type="entry name" value="ACT_dom"/>
</dbReference>
<dbReference type="InterPro" id="IPR008310">
    <property type="entry name" value="UPF0735_ACT_dom-cont"/>
</dbReference>
<dbReference type="NCBIfam" id="NF003361">
    <property type="entry name" value="PRK04435.1"/>
    <property type="match status" value="1"/>
</dbReference>
<dbReference type="PIRSF" id="PIRSF025624">
    <property type="entry name" value="ACT_PheB"/>
    <property type="match status" value="1"/>
</dbReference>
<dbReference type="SUPFAM" id="SSF55021">
    <property type="entry name" value="ACT-like"/>
    <property type="match status" value="1"/>
</dbReference>
<dbReference type="PROSITE" id="PS51671">
    <property type="entry name" value="ACT"/>
    <property type="match status" value="1"/>
</dbReference>
<name>Y1579_STAAS</name>
<organism>
    <name type="scientific">Staphylococcus aureus (strain MSSA476)</name>
    <dbReference type="NCBI Taxonomy" id="282459"/>
    <lineage>
        <taxon>Bacteria</taxon>
        <taxon>Bacillati</taxon>
        <taxon>Bacillota</taxon>
        <taxon>Bacilli</taxon>
        <taxon>Bacillales</taxon>
        <taxon>Staphylococcaceae</taxon>
        <taxon>Staphylococcus</taxon>
    </lineage>
</organism>
<feature type="chain" id="PRO_0000206478" description="UPF0735 ACT domain-containing protein SAS1579">
    <location>
        <begin position="1"/>
        <end position="152"/>
    </location>
</feature>
<feature type="domain" description="ACT" evidence="1">
    <location>
        <begin position="75"/>
        <end position="150"/>
    </location>
</feature>
<gene>
    <name type="ordered locus">SAS1579</name>
</gene>
<proteinExistence type="inferred from homology"/>
<protein>
    <recommendedName>
        <fullName evidence="1">UPF0735 ACT domain-containing protein SAS1579</fullName>
    </recommendedName>
</protein>
<accession>Q6G8S6</accession>
<comment type="similarity">
    <text evidence="1">Belongs to the UPF0735 family.</text>
</comment>
<evidence type="ECO:0000255" key="1">
    <source>
        <dbReference type="HAMAP-Rule" id="MF_00707"/>
    </source>
</evidence>
<sequence length="152" mass="17474">MMDNKDYKKFYLIREDVLPESVVKTLKIKDALKSDPTLSIYDAVKQFDLSRSAFYKYRETIFPVDDKMLDHREFTLILYVTDIVGMLARVLDVISKLELSVLTIHQSIPMEEKATITLSLNAKSKETSVEDVIGALRNLDYVSKVELISMSM</sequence>